<sequence>MVQVPSTNTVKESRHVAISGLPSTLPDDRLQLHFTKFGEIQRLVRQHGNPEIVLVSYMDARGALRARSTKPQFEDSIEYKISAYIPEPTQNSSMASMSSTPSSGQSSSPRNAELSPQRYGDTRGAEVKSPSFRNQMEARRGGPHLSVQSQQRHSREYWPIPEFPSESTACVVYEIQSGSTPERDLFELVKKHSKRSGVPIDIQLESTTEPGWKKARVHYYRLDTDGLKADKSLILGRPPKFRVYYPTSGEQKHPQCHPSTSYAIPKLKGDHLLKASCSVHVPHLDRHSPDHYRRRFESYGQVIDVDMVKSNDNKAFAVVQFTNIDDAQKALQDTNIPKPMSYQSRPSHRIIIFYLPIECTNEEIMLIIRSLSDRIVDICVDWWDRSAVITLDDMEPANLLLKRMKLVGRNNFGEHKVAVDFCSDRFNLYFINRKKENIEVAARSSSPTSKSENDQGSSSPSSSRDRQNLHDPLQTRSSVEHHTNQEDQENNASGSDSSSDSDSEEGSSSSNEDSDEQNDVDEEDDEDVVSEEKRHEPEEGKSSSPGNGHRDESNGDKDHEDSSERFSQPSTSSHHETSHSPEKDSEAYQSRSFSPLNYQSQSPGYEFLESKEIKQEFSPTTSSASSSDLELDMEMPDNPLTRMLERMHWRPFIDVSSFVNRIDEIVELNQKARASYEKFTGRPFPKCNNDEVLSIQKIVFHEPRDYYYYENPCSELEVRIRDWRKLSDTADLDDFRATDSKELGRDQPAGGRTSGRPSLDESRTNRLSFDSTHHPAELAQRSHSLCIGPMTPSTPFPTSQPLLVNTTHLPGTSQPSTSGGITTPRSSQPPPLMSPVSRHNSMSSTGRPASIQTLRHQSVMFPPDVSIPPPPIPPTHDEMMAPRGTPPSRRSSETMVPLRSPPFGTPIQNLLTMPIVPPPHLIAATSTGTHSVSSSAHSTPRHSISGTPVHCEPSNSKTSQPPTPKSRPEKVQIRHDTISKSGPSNAINALQARSQSMTSGDPKKSAPSTPVVRDAGSDLVAQIMSNQPNLGLRKLPRIEKKSSALQNIQNHQPPHSNANSTPSTPSTSTHQAMFKDKEKERKKKEKEKEEREREARREMKRKETKEERNKRKEMERAKRLEDERQERKREKKKERDERKKEKEKVRKKAEKEKLKKKKHRKGDSSDESDSDSNDELDLDVRKSTKEMTQEEKDHQLALLLSKGGIIENLKSRRRSDKRAHDSFEKMQQKSQQRRVLIESSDDEGGKDGDKGNSSNGEESDSEKADLPPPPAPPSLSESADQRLKVLKEREKGELTTSSDDEDHNDAGEIHQQRLTEDRENRKRQKSLTAYSSDEQGERKNVPKRMRRDDSEDAAAKHPGWSAKDDQKQRKRKLEHRRSSEDESKKNAKRDFRDIPHEDVSDEEETEDGSRSRRQSTSSTISNVTAKERKEKSGKTPLRIVPEPTGTPLLSPKILSPKHLSPKTSTSSTKRSSISDHENLISPRQRNRTTSSTSTATTSSKHEALSIPEKPLSPPVTAKSSVSSIDDPSIRDEFSMNSAADSPMSTTGRPMVLTKAAMKAFNSTPPKKKNSSSGQHDSSSGSSSDSSSSDGSTSSDDSSDDEVPKQTEPVTSIPVVASDNGSPENVVVETPSIVSQTPREPEPFTISEQSSESEPEAVPECPEASVEPQMETSQNVEPVSEEHEDSHEHGDSEVAVESQQQPLEHQEEKEELENKILDVAAEHHEEQVQGDEDSVESSIPAPSDEPDPVTQAQEKSAHTLISDQETDQAVQSIFDEEEADEFPQYPDFGISTNEKEVSGKDPHNIKPTEPLNNGHTDLLFSPSSSAHASEKQSTKSEDDMEEDSELVVMEKEVPMEQVIAQEVHVPSEPSPMEEEVKLETSPVPKEEPIKMEESPEQTPTPDLISNNESQDTPGAVNNHLHENHDAVQTPIQLQPASQHQVAQPSPRPAVAPDSQQNGPVLVSQQSQPSPMSSQQSDMAQNLILSSKDINDLAAKLHKNPEALAQATRGDCSGIFQHLLLHAQGNGQNMTPEMLQLKAAFFAQQQENEANQMMQAKMKQQTINKDRIKEQERVKRMYEENERKVEEDRREKQRKEEERQRLAAATAAATMATQKAAEALKQKQEVPRHGFQHVLSMMTPEARSLYEQFPGLSSYINRDSIGATNGVLHLPTQSIQRPSSTASTSSNPPKAPLQPSASVNQNTIDPAEIEEIRVQRWFYKHFPMVWTGRLALKSTEAMINLHLINGSETFLNDVLGRQVTEENPRRDSVKILQRLRLDNGQVEHIYRILTNPEYACCLALSSVNNIENLKENDTNLKSHFIDYLINKKIAGISSLGEVETKFKSARVHVFAPGEIVNRYLSELATSLHDYLQNTDTRYLLIVFTNDKADPNMTGPPSVASLAVPPVSST</sequence>
<comment type="function">
    <molecule>Isoform d</molecule>
    <text evidence="5">Probable transcriptional corepressor which modulates activity of the nuclear hormone receptor daf-12 to regulate the dauer diapause.</text>
</comment>
<comment type="subunit">
    <text evidence="5">Isoform d interacts with daf-12.</text>
</comment>
<comment type="subcellular location">
    <subcellularLocation>
        <location evidence="5">Nucleus</location>
    </subcellularLocation>
</comment>
<comment type="alternative products">
    <event type="alternative splicing"/>
    <isoform>
        <id>G5EGK6-1</id>
        <name evidence="10">b</name>
        <name evidence="6">din-1LA</name>
        <sequence type="displayed"/>
    </isoform>
    <isoform>
        <id>G5EGK6-2</id>
        <name evidence="9">a</name>
        <name evidence="6">din-1LD</name>
        <sequence type="described" ref="VSP_057866"/>
    </isoform>
    <isoform>
        <id>G5EGK6-3</id>
        <name evidence="11">c</name>
        <name evidence="6">din-1LB</name>
        <sequence type="described" ref="VSP_057865"/>
    </isoform>
    <isoform>
        <id>G5EGK6-4</id>
        <name evidence="12">d</name>
        <name evidence="6">din-1S</name>
        <sequence type="described" ref="VSP_057862"/>
    </isoform>
    <isoform>
        <id>G5EGK6-5</id>
        <name evidence="13">e</name>
        <name evidence="6">din-1LC</name>
        <sequence type="described" ref="VSP_057864"/>
    </isoform>
    <isoform>
        <id>G5EGK6-6</id>
        <name evidence="14">f</name>
        <sequence type="described" ref="VSP_057863"/>
    </isoform>
    <isoform>
        <id>G5EGK6-7</id>
        <name evidence="15">g</name>
        <sequence type="described" ref="VSP_057861"/>
    </isoform>
</comment>
<comment type="tissue specificity">
    <text evidence="5">Isoform d is widely expressed: detected in the hypodermis, seam cells, intestine, somatic gonad, neurons, vulval precursors, body wall muscle and pharynx.</text>
</comment>
<comment type="developmental stage">
    <text evidence="5">Isoforms b and d are widely expressed from embryogenesis to adulthood. Isoform d is highly expressed in late L1 and L2 larval stages in XXX neuroendocrine cells. Isoform b is expressed more highly in the embryo and the L1 larval stage.</text>
</comment>
<comment type="disruption phenotype">
    <text evidence="5">Knockout of isoform d results in defective dauer formation. Eighteen percent of temperature sensitive mutants are embryonic lethal. The surviving animals are small (Sma), clear (Clr), uncoordinated, constipated and sterile. They display variable morphological defects in the main body and pharynx.</text>
</comment>
<gene>
    <name evidence="10" type="primary">din-1</name>
    <name evidence="10" type="ORF">F07A11.6</name>
</gene>
<organism evidence="8">
    <name type="scientific">Caenorhabditis elegans</name>
    <dbReference type="NCBI Taxonomy" id="6239"/>
    <lineage>
        <taxon>Eukaryota</taxon>
        <taxon>Metazoa</taxon>
        <taxon>Ecdysozoa</taxon>
        <taxon>Nematoda</taxon>
        <taxon>Chromadorea</taxon>
        <taxon>Rhabditida</taxon>
        <taxon>Rhabditina</taxon>
        <taxon>Rhabditomorpha</taxon>
        <taxon>Rhabditoidea</taxon>
        <taxon>Rhabditidae</taxon>
        <taxon>Peloderinae</taxon>
        <taxon>Caenorhabditis</taxon>
    </lineage>
</organism>
<name>DIN1_CAEEL</name>
<dbReference type="EMBL" id="BX284602">
    <property type="protein sequence ID" value="CAB54211.2"/>
    <property type="molecule type" value="Genomic_DNA"/>
</dbReference>
<dbReference type="EMBL" id="BX284602">
    <property type="protein sequence ID" value="CAB54210.3"/>
    <property type="molecule type" value="Genomic_DNA"/>
</dbReference>
<dbReference type="EMBL" id="BX284602">
    <property type="protein sequence ID" value="CAD57694.1"/>
    <property type="molecule type" value="Genomic_DNA"/>
</dbReference>
<dbReference type="EMBL" id="BX284602">
    <property type="protein sequence ID" value="CAD57693.1"/>
    <property type="molecule type" value="Genomic_DNA"/>
</dbReference>
<dbReference type="EMBL" id="BX284602">
    <property type="protein sequence ID" value="CAH60796.1"/>
    <property type="molecule type" value="Genomic_DNA"/>
</dbReference>
<dbReference type="EMBL" id="BX284602">
    <property type="protein sequence ID" value="CBW48357.1"/>
    <property type="molecule type" value="Genomic_DNA"/>
</dbReference>
<dbReference type="EMBL" id="BX284602">
    <property type="protein sequence ID" value="CBW48356.1"/>
    <property type="molecule type" value="Genomic_DNA"/>
</dbReference>
<dbReference type="PIR" id="T20531">
    <property type="entry name" value="T20531"/>
</dbReference>
<dbReference type="PIR" id="T20532">
    <property type="entry name" value="T20532"/>
</dbReference>
<dbReference type="RefSeq" id="NP_001022068.1">
    <property type="nucleotide sequence ID" value="NM_001026897.3"/>
</dbReference>
<dbReference type="RefSeq" id="NP_001254306.1">
    <molecule id="G5EGK6-6"/>
    <property type="nucleotide sequence ID" value="NM_001267377.3"/>
</dbReference>
<dbReference type="RefSeq" id="NP_001254307.1">
    <molecule id="G5EGK6-7"/>
    <property type="nucleotide sequence ID" value="NM_001267378.3"/>
</dbReference>
<dbReference type="RefSeq" id="NP_001379428.1">
    <molecule id="G5EGK6-5"/>
    <property type="nucleotide sequence ID" value="NM_001393199.1"/>
</dbReference>
<dbReference type="RefSeq" id="NP_496484.3">
    <molecule id="G5EGK6-2"/>
    <property type="nucleotide sequence ID" value="NM_064083.5"/>
</dbReference>
<dbReference type="RefSeq" id="NP_496485.2">
    <molecule id="G5EGK6-1"/>
    <property type="nucleotide sequence ID" value="NM_064084.6"/>
</dbReference>
<dbReference type="RefSeq" id="NP_871901.1">
    <molecule id="G5EGK6-3"/>
    <property type="nucleotide sequence ID" value="NM_182101.5"/>
</dbReference>
<dbReference type="RefSeq" id="NP_871902.1">
    <molecule id="G5EGK6-4"/>
    <property type="nucleotide sequence ID" value="NM_182102.7"/>
</dbReference>
<dbReference type="SMR" id="G5EGK6"/>
<dbReference type="FunCoup" id="G5EGK6">
    <property type="interactions" value="1757"/>
</dbReference>
<dbReference type="STRING" id="6239.F07A11.6b.1"/>
<dbReference type="PaxDb" id="6239-F07A11.6b"/>
<dbReference type="PeptideAtlas" id="G5EGK6"/>
<dbReference type="EnsemblMetazoa" id="F07A11.6a.1">
    <molecule id="G5EGK6-2"/>
    <property type="protein sequence ID" value="F07A11.6a.1"/>
    <property type="gene ID" value="WBGene00008549"/>
</dbReference>
<dbReference type="EnsemblMetazoa" id="F07A11.6b.1">
    <molecule id="G5EGK6-1"/>
    <property type="protein sequence ID" value="F07A11.6b.1"/>
    <property type="gene ID" value="WBGene00008549"/>
</dbReference>
<dbReference type="EnsemblMetazoa" id="F07A11.6c.1">
    <molecule id="G5EGK6-3"/>
    <property type="protein sequence ID" value="F07A11.6c.1"/>
    <property type="gene ID" value="WBGene00008549"/>
</dbReference>
<dbReference type="EnsemblMetazoa" id="F07A11.6d.1">
    <molecule id="G5EGK6-4"/>
    <property type="protein sequence ID" value="F07A11.6d.1"/>
    <property type="gene ID" value="WBGene00008549"/>
</dbReference>
<dbReference type="EnsemblMetazoa" id="F07A11.6e.1">
    <molecule id="G5EGK6-5"/>
    <property type="protein sequence ID" value="F07A11.6e.1"/>
    <property type="gene ID" value="WBGene00008549"/>
</dbReference>
<dbReference type="EnsemblMetazoa" id="F07A11.6f.1">
    <molecule id="G5EGK6-6"/>
    <property type="protein sequence ID" value="F07A11.6f.1"/>
    <property type="gene ID" value="WBGene00008549"/>
</dbReference>
<dbReference type="EnsemblMetazoa" id="F07A11.6g.1">
    <molecule id="G5EGK6-7"/>
    <property type="protein sequence ID" value="F07A11.6g.1"/>
    <property type="gene ID" value="WBGene00008549"/>
</dbReference>
<dbReference type="GeneID" id="174782"/>
<dbReference type="KEGG" id="cel:CELE_F07A11.6"/>
<dbReference type="UCSC" id="F07A11.6c">
    <property type="organism name" value="c. elegans"/>
</dbReference>
<dbReference type="AGR" id="WB:WBGene00008549"/>
<dbReference type="CTD" id="174782"/>
<dbReference type="WormBase" id="F07A11.6a">
    <molecule id="G5EGK6-2"/>
    <property type="protein sequence ID" value="CE37499"/>
    <property type="gene ID" value="WBGene00008549"/>
    <property type="gene designation" value="din-1"/>
</dbReference>
<dbReference type="WormBase" id="F07A11.6b">
    <molecule id="G5EGK6-1"/>
    <property type="protein sequence ID" value="CE32618"/>
    <property type="gene ID" value="WBGene00008549"/>
    <property type="gene designation" value="din-1"/>
</dbReference>
<dbReference type="WormBase" id="F07A11.6c">
    <molecule id="G5EGK6-3"/>
    <property type="protein sequence ID" value="CE32619"/>
    <property type="gene ID" value="WBGene00008549"/>
    <property type="gene designation" value="din-1"/>
</dbReference>
<dbReference type="WormBase" id="F07A11.6d">
    <molecule id="G5EGK6-4"/>
    <property type="protein sequence ID" value="CE03148"/>
    <property type="gene ID" value="WBGene00008549"/>
    <property type="gene designation" value="din-1"/>
</dbReference>
<dbReference type="WormBase" id="F07A11.6e">
    <molecule id="G5EGK6-5"/>
    <property type="protein sequence ID" value="CE37500"/>
    <property type="gene ID" value="WBGene00008549"/>
    <property type="gene designation" value="din-1"/>
</dbReference>
<dbReference type="WormBase" id="F07A11.6f">
    <molecule id="G5EGK6-6"/>
    <property type="protein sequence ID" value="CE45315"/>
    <property type="gene ID" value="WBGene00008549"/>
    <property type="gene designation" value="din-1"/>
</dbReference>
<dbReference type="WormBase" id="F07A11.6g">
    <molecule id="G5EGK6-7"/>
    <property type="protein sequence ID" value="CE45296"/>
    <property type="gene ID" value="WBGene00008549"/>
    <property type="gene designation" value="din-1"/>
</dbReference>
<dbReference type="eggNOG" id="KOG0112">
    <property type="taxonomic scope" value="Eukaryota"/>
</dbReference>
<dbReference type="InParanoid" id="G5EGK6"/>
<dbReference type="OMA" id="RDIPHED"/>
<dbReference type="OrthoDB" id="6407164at2759"/>
<dbReference type="PRO" id="PR:G5EGK6"/>
<dbReference type="Proteomes" id="UP000001940">
    <property type="component" value="Chromosome II"/>
</dbReference>
<dbReference type="Bgee" id="WBGene00008549">
    <property type="expression patterns" value="Expressed in pharyngeal muscle cell (C elegans) and 3 other cell types or tissues"/>
</dbReference>
<dbReference type="GO" id="GO:0005634">
    <property type="term" value="C:nucleus"/>
    <property type="evidence" value="ECO:0000314"/>
    <property type="project" value="WormBase"/>
</dbReference>
<dbReference type="GO" id="GO:0003723">
    <property type="term" value="F:RNA binding"/>
    <property type="evidence" value="ECO:0007669"/>
    <property type="project" value="UniProtKB-KW"/>
</dbReference>
<dbReference type="GO" id="GO:0061630">
    <property type="term" value="F:ubiquitin protein ligase activity"/>
    <property type="evidence" value="ECO:0000318"/>
    <property type="project" value="GO_Central"/>
</dbReference>
<dbReference type="GO" id="GO:0016567">
    <property type="term" value="P:protein ubiquitination"/>
    <property type="evidence" value="ECO:0000318"/>
    <property type="project" value="GO_Central"/>
</dbReference>
<dbReference type="GO" id="GO:0006511">
    <property type="term" value="P:ubiquitin-dependent protein catabolic process"/>
    <property type="evidence" value="ECO:0000318"/>
    <property type="project" value="GO_Central"/>
</dbReference>
<dbReference type="CDD" id="cd21543">
    <property type="entry name" value="SPOC_SHARP"/>
    <property type="match status" value="1"/>
</dbReference>
<dbReference type="FunFam" id="2.40.290.10:FF:000002">
    <property type="entry name" value="Spen family transcriptional repressor"/>
    <property type="match status" value="1"/>
</dbReference>
<dbReference type="Gene3D" id="2.40.290.10">
    <property type="match status" value="1"/>
</dbReference>
<dbReference type="Gene3D" id="3.30.70.330">
    <property type="match status" value="1"/>
</dbReference>
<dbReference type="InterPro" id="IPR012677">
    <property type="entry name" value="Nucleotide-bd_a/b_plait_sf"/>
</dbReference>
<dbReference type="InterPro" id="IPR035979">
    <property type="entry name" value="RBD_domain_sf"/>
</dbReference>
<dbReference type="InterPro" id="IPR000504">
    <property type="entry name" value="RRM_dom"/>
</dbReference>
<dbReference type="InterPro" id="IPR016194">
    <property type="entry name" value="SPOC-like_C_dom_sf"/>
</dbReference>
<dbReference type="InterPro" id="IPR012921">
    <property type="entry name" value="SPOC_C"/>
</dbReference>
<dbReference type="InterPro" id="IPR010912">
    <property type="entry name" value="SPOC_met"/>
</dbReference>
<dbReference type="PANTHER" id="PTHR23075:SF0">
    <property type="entry name" value="ATPASE FAMILY AAA DOMAIN-CONTAINING PROTEIN 3"/>
    <property type="match status" value="1"/>
</dbReference>
<dbReference type="PANTHER" id="PTHR23075">
    <property type="entry name" value="PUTATIVE ATP-ASE"/>
    <property type="match status" value="1"/>
</dbReference>
<dbReference type="Pfam" id="PF00076">
    <property type="entry name" value="RRM_1"/>
    <property type="match status" value="1"/>
</dbReference>
<dbReference type="Pfam" id="PF07744">
    <property type="entry name" value="SPOC"/>
    <property type="match status" value="1"/>
</dbReference>
<dbReference type="SMART" id="SM00360">
    <property type="entry name" value="RRM"/>
    <property type="match status" value="2"/>
</dbReference>
<dbReference type="SUPFAM" id="SSF54928">
    <property type="entry name" value="RNA-binding domain, RBD"/>
    <property type="match status" value="2"/>
</dbReference>
<dbReference type="SUPFAM" id="SSF100939">
    <property type="entry name" value="SPOC domain-like"/>
    <property type="match status" value="1"/>
</dbReference>
<dbReference type="PROSITE" id="PS50102">
    <property type="entry name" value="RRM"/>
    <property type="match status" value="1"/>
</dbReference>
<dbReference type="PROSITE" id="PS50917">
    <property type="entry name" value="SPOC"/>
    <property type="match status" value="1"/>
</dbReference>
<reference evidence="8" key="1">
    <citation type="journal article" date="1998" name="Science">
        <title>Genome sequence of the nematode C. elegans: a platform for investigating biology.</title>
        <authorList>
            <consortium name="The C. elegans sequencing consortium"/>
        </authorList>
    </citation>
    <scope>NUCLEOTIDE SEQUENCE [LARGE SCALE GENOMIC DNA]</scope>
    <source>
        <strain evidence="8">Bristol N2</strain>
    </source>
</reference>
<reference evidence="7" key="2">
    <citation type="journal article" date="2004" name="Genes Dev.">
        <title>A novel nuclear receptor/coregulator complex controls C. elegans lipid metabolism, larval development, and aging.</title>
        <authorList>
            <person name="Ludewig A.H."/>
            <person name="Kober-Eisermann C."/>
            <person name="Weitzel C."/>
            <person name="Bethke A."/>
            <person name="Neubert K."/>
            <person name="Gerisch B."/>
            <person name="Hutter H."/>
            <person name="Antebi A."/>
        </authorList>
    </citation>
    <scope>FUNCTION (ISOFORM D)</scope>
    <scope>INTERACTION WITH DAF-12</scope>
    <scope>SUBCELLULAR LOCATION</scope>
    <scope>ALTERNATIVE SPLICING</scope>
    <scope>TISSUE SPECIFICITY</scope>
    <scope>DEVELOPMENTAL STAGE</scope>
    <scope>DISRUPTION PHENOTYPE</scope>
</reference>
<evidence type="ECO:0000255" key="1"/>
<evidence type="ECO:0000255" key="2">
    <source>
        <dbReference type="PROSITE-ProRule" id="PRU00176"/>
    </source>
</evidence>
<evidence type="ECO:0000255" key="3">
    <source>
        <dbReference type="PROSITE-ProRule" id="PRU00249"/>
    </source>
</evidence>
<evidence type="ECO:0000256" key="4">
    <source>
        <dbReference type="SAM" id="MobiDB-lite"/>
    </source>
</evidence>
<evidence type="ECO:0000269" key="5">
    <source>
    </source>
</evidence>
<evidence type="ECO:0000303" key="6">
    <source>
    </source>
</evidence>
<evidence type="ECO:0000305" key="7"/>
<evidence type="ECO:0000312" key="8">
    <source>
        <dbReference type="Proteomes" id="UP000001940"/>
    </source>
</evidence>
<evidence type="ECO:0000312" key="9">
    <source>
        <dbReference type="WormBase" id="F07A11.6a"/>
    </source>
</evidence>
<evidence type="ECO:0000312" key="10">
    <source>
        <dbReference type="WormBase" id="F07A11.6b"/>
    </source>
</evidence>
<evidence type="ECO:0000312" key="11">
    <source>
        <dbReference type="WormBase" id="F07A11.6c"/>
    </source>
</evidence>
<evidence type="ECO:0000312" key="12">
    <source>
        <dbReference type="WormBase" id="F07A11.6d"/>
    </source>
</evidence>
<evidence type="ECO:0000312" key="13">
    <source>
        <dbReference type="WormBase" id="F07A11.6e"/>
    </source>
</evidence>
<evidence type="ECO:0000312" key="14">
    <source>
        <dbReference type="WormBase" id="F07A11.6f"/>
    </source>
</evidence>
<evidence type="ECO:0000312" key="15">
    <source>
        <dbReference type="WormBase" id="F07A11.6g"/>
    </source>
</evidence>
<protein>
    <recommendedName>
        <fullName evidence="10">Daf-12-interacting protein 1</fullName>
    </recommendedName>
</protein>
<feature type="chain" id="PRO_0000433990" description="Daf-12-interacting protein 1" evidence="7">
    <location>
        <begin position="1"/>
        <end position="2407"/>
    </location>
</feature>
<feature type="domain" description="RRM" evidence="2">
    <location>
        <begin position="277"/>
        <end position="335"/>
    </location>
</feature>
<feature type="domain" description="SPOC" evidence="3">
    <location>
        <begin position="2213"/>
        <end position="2383"/>
    </location>
</feature>
<feature type="region of interest" description="Disordered" evidence="4">
    <location>
        <begin position="90"/>
        <end position="152"/>
    </location>
</feature>
<feature type="region of interest" description="Disordered" evidence="4">
    <location>
        <begin position="439"/>
        <end position="632"/>
    </location>
</feature>
<feature type="region of interest" description="Disordered" evidence="4">
    <location>
        <begin position="737"/>
        <end position="767"/>
    </location>
</feature>
<feature type="region of interest" description="Disordered" evidence="4">
    <location>
        <begin position="785"/>
        <end position="849"/>
    </location>
</feature>
<feature type="region of interest" description="Disordered" evidence="4">
    <location>
        <begin position="874"/>
        <end position="896"/>
    </location>
</feature>
<feature type="region of interest" description="Disordered" evidence="4">
    <location>
        <begin position="921"/>
        <end position="986"/>
    </location>
</feature>
<feature type="region of interest" description="Disordered" evidence="4">
    <location>
        <begin position="993"/>
        <end position="1012"/>
    </location>
</feature>
<feature type="region of interest" description="Disordered" evidence="4">
    <location>
        <begin position="1025"/>
        <end position="1844"/>
    </location>
</feature>
<feature type="region of interest" description="Disordered" evidence="4">
    <location>
        <begin position="1858"/>
        <end position="1918"/>
    </location>
</feature>
<feature type="region of interest" description="Disordered" evidence="4">
    <location>
        <begin position="1932"/>
        <end position="1976"/>
    </location>
</feature>
<feature type="region of interest" description="Disordered" evidence="4">
    <location>
        <begin position="2077"/>
        <end position="2103"/>
    </location>
</feature>
<feature type="region of interest" description="Disordered" evidence="4">
    <location>
        <begin position="2172"/>
        <end position="2200"/>
    </location>
</feature>
<feature type="coiled-coil region" evidence="1">
    <location>
        <begin position="2049"/>
        <end position="2110"/>
    </location>
</feature>
<feature type="compositionally biased region" description="Low complexity" evidence="4">
    <location>
        <begin position="90"/>
        <end position="112"/>
    </location>
</feature>
<feature type="compositionally biased region" description="Polar residues" evidence="4">
    <location>
        <begin position="443"/>
        <end position="456"/>
    </location>
</feature>
<feature type="compositionally biased region" description="Acidic residues" evidence="4">
    <location>
        <begin position="512"/>
        <end position="529"/>
    </location>
</feature>
<feature type="compositionally biased region" description="Basic and acidic residues" evidence="4">
    <location>
        <begin position="530"/>
        <end position="541"/>
    </location>
</feature>
<feature type="compositionally biased region" description="Basic and acidic residues" evidence="4">
    <location>
        <begin position="548"/>
        <end position="564"/>
    </location>
</feature>
<feature type="compositionally biased region" description="Basic and acidic residues" evidence="4">
    <location>
        <begin position="573"/>
        <end position="586"/>
    </location>
</feature>
<feature type="compositionally biased region" description="Polar residues" evidence="4">
    <location>
        <begin position="587"/>
        <end position="603"/>
    </location>
</feature>
<feature type="compositionally biased region" description="Low complexity" evidence="4">
    <location>
        <begin position="618"/>
        <end position="627"/>
    </location>
</feature>
<feature type="compositionally biased region" description="Polar residues" evidence="4">
    <location>
        <begin position="791"/>
        <end position="826"/>
    </location>
</feature>
<feature type="compositionally biased region" description="Polar residues" evidence="4">
    <location>
        <begin position="837"/>
        <end position="849"/>
    </location>
</feature>
<feature type="compositionally biased region" description="Polar residues" evidence="4">
    <location>
        <begin position="924"/>
        <end position="946"/>
    </location>
</feature>
<feature type="compositionally biased region" description="Basic and acidic residues" evidence="4">
    <location>
        <begin position="966"/>
        <end position="978"/>
    </location>
</feature>
<feature type="compositionally biased region" description="Polar residues" evidence="4">
    <location>
        <begin position="1043"/>
        <end position="1052"/>
    </location>
</feature>
<feature type="compositionally biased region" description="Low complexity" evidence="4">
    <location>
        <begin position="1053"/>
        <end position="1070"/>
    </location>
</feature>
<feature type="compositionally biased region" description="Basic and acidic residues" evidence="4">
    <location>
        <begin position="1086"/>
        <end position="1153"/>
    </location>
</feature>
<feature type="compositionally biased region" description="Acidic residues" evidence="4">
    <location>
        <begin position="1165"/>
        <end position="1177"/>
    </location>
</feature>
<feature type="compositionally biased region" description="Basic and acidic residues" evidence="4">
    <location>
        <begin position="1178"/>
        <end position="1195"/>
    </location>
</feature>
<feature type="compositionally biased region" description="Basic and acidic residues" evidence="4">
    <location>
        <begin position="1218"/>
        <end position="1227"/>
    </location>
</feature>
<feature type="compositionally biased region" description="Basic and acidic residues" evidence="4">
    <location>
        <begin position="1279"/>
        <end position="1293"/>
    </location>
</feature>
<feature type="compositionally biased region" description="Basic and acidic residues" evidence="4">
    <location>
        <begin position="1304"/>
        <end position="1320"/>
    </location>
</feature>
<feature type="compositionally biased region" description="Basic and acidic residues" evidence="4">
    <location>
        <begin position="1335"/>
        <end position="1355"/>
    </location>
</feature>
<feature type="compositionally biased region" description="Basic and acidic residues" evidence="4">
    <location>
        <begin position="1376"/>
        <end position="1398"/>
    </location>
</feature>
<feature type="compositionally biased region" description="Low complexity" evidence="4">
    <location>
        <begin position="1456"/>
        <end position="1471"/>
    </location>
</feature>
<feature type="compositionally biased region" description="Low complexity" evidence="4">
    <location>
        <begin position="1488"/>
        <end position="1498"/>
    </location>
</feature>
<feature type="compositionally biased region" description="Polar residues" evidence="4">
    <location>
        <begin position="1534"/>
        <end position="1547"/>
    </location>
</feature>
<feature type="compositionally biased region" description="Low complexity" evidence="4">
    <location>
        <begin position="1570"/>
        <end position="1595"/>
    </location>
</feature>
<feature type="compositionally biased region" description="Basic and acidic residues" evidence="4">
    <location>
        <begin position="1679"/>
        <end position="1691"/>
    </location>
</feature>
<feature type="compositionally biased region" description="Basic and acidic residues" evidence="4">
    <location>
        <begin position="1703"/>
        <end position="1726"/>
    </location>
</feature>
<feature type="compositionally biased region" description="Polar residues" evidence="4">
    <location>
        <begin position="1749"/>
        <end position="1770"/>
    </location>
</feature>
<feature type="compositionally biased region" description="Basic and acidic residues" evidence="4">
    <location>
        <begin position="1792"/>
        <end position="1805"/>
    </location>
</feature>
<feature type="compositionally biased region" description="Polar residues" evidence="4">
    <location>
        <begin position="1809"/>
        <end position="1826"/>
    </location>
</feature>
<feature type="compositionally biased region" description="Basic and acidic residues" evidence="4">
    <location>
        <begin position="1827"/>
        <end position="1836"/>
    </location>
</feature>
<feature type="compositionally biased region" description="Basic and acidic residues" evidence="4">
    <location>
        <begin position="1873"/>
        <end position="1892"/>
    </location>
</feature>
<feature type="compositionally biased region" description="Polar residues" evidence="4">
    <location>
        <begin position="1895"/>
        <end position="1911"/>
    </location>
</feature>
<feature type="compositionally biased region" description="Polar residues" evidence="4">
    <location>
        <begin position="1932"/>
        <end position="1942"/>
    </location>
</feature>
<feature type="compositionally biased region" description="Low complexity" evidence="4">
    <location>
        <begin position="1962"/>
        <end position="1975"/>
    </location>
</feature>
<feature type="compositionally biased region" description="Basic and acidic residues" evidence="4">
    <location>
        <begin position="2077"/>
        <end position="2099"/>
    </location>
</feature>
<feature type="compositionally biased region" description="Low complexity" evidence="4">
    <location>
        <begin position="2176"/>
        <end position="2186"/>
    </location>
</feature>
<feature type="splice variant" id="VSP_057861" description="In isoform g." evidence="7">
    <location>
        <begin position="1"/>
        <end position="2221"/>
    </location>
</feature>
<feature type="splice variant" id="VSP_057862" description="In isoform d." evidence="7">
    <original>MVQVPSTNTVKESRHVAISGLPSTLPDDRLQLHFTKFGEIQRLVRQHGNPEIVLVSYMDARGALRARSTKPQFEDSIEYKISAYIPEPTQNSSMASMSSTPSSGQSSSPRNAELSPQRYGDTRGAEVKSPSFRNQMEARRGGPHLSVQSQQRHSREYWPIPEFPSESTACVVYEIQSGSTPERDLFELVKKHSKRSGVPIDIQLESTTEPGWKKARVHYYRLDTDGLKADKSLILGRPPKFRVYYPTSGEQKHPQCHPSTSYAIPKLKGDHLLKASCSVHVPHLDRHSPDHYRRRFESYGQVIDVDMVKSNDNKAFAVVQFTNIDDAQKALQDTNIPKPMSYQSRPSHRIIIFYLPIECTNEEIMLIIRSLSDRIVDICVDWWDRSAVITLDDMEPANLLLKRMKLVGRNNFGEHKVAVDFCSDRFNLYFINRKKENIEVAARSSSPTSKSENDQGSSSPSSSRDRQNLHDPLQTRSSVEHHTNQEDQENNASGSDSSSDSDSEEGSSSSNEDSDEQNDVDEEDDEDVVSEEKRHEPEEGKSSSPGNGHRDESNGDKDHEDSSERFSQPSTSSHHETSHSPEKDSEAYQSRSFSPLNYQSQSPGYEFLESKEIKQEFSPTTSSASSSDLELDMEMPDNPLTRMLERMHWRPFIDVSSFVNRIDEIVELNQKARASYEKFTGRPFPKCNNDEVLSIQKIVFHEPRDYYYYENPCSELEVRIRDWRKLSDTADLDDFRATDSKELGRDQPAGGRTSGRPSLDESRTNRLSFDSTHHPAELAQRSHSLCIGPMTPSTPFPTSQPLLVNTTHLPGTSQPSTSGGITTPRSSQPPPLMSPVSRHNSMSSTGRPASIQTLRHQSVMFPPDVSIPPPPIPPTHDEMMAPRGTPPSRRSSETMVPLRSPPFGTPIQNLLTMPIVPPPHLIAATSTGTHSVSSSAHSTPRHSISGTPVHCEPSNSKTSQPPTPKSRPEKVQIRHDTISKSGPSNAINALQARSQSMTSGDPKKSAPSTPVVRDAGSDLVAQIMSNQPNLGLRKLPRIEKKSSALQNIQNHQPPHSNANSTPSTPSTSTHQAMFKDKEKERKKKEKEKEEREREARREMKRKETKEERNKRKEMERAKRLEDERQERKREKKKERDERKKEKEKVRKKAEKEKLKKKKHRKGDSSDESDSDSNDELDLDVRKSTKEMTQEEKDHQLALLLSKGGIIENLKSRRRSDKRAHDSFEKMQQKSQQRRVLIESSDDEGGKDGDKGNSSNGEESDSEKADLPPPPAPPSLSESADQRLKVLKEREKGELTTSSDDEDHNDAGEIHQQRLTEDRENRKRQKSLTAYSSDEQGERKNVPKRMRRDDSEDAAAKHPGWSAKDDQKQRKRKLEHRRSSEDESKKNAKRDFRDIPHEDVSDEEETEDGSRSRRQSTSSTISNVTAKERKEKSGKTPLRIVPEPTGTPLLSPKILSPKHLSPKTSTSSTKRSSISDHENLISPRQRNRTTSSTSTATTSSKHEALSIPEKPLSPPVTAKSSVSSIDDPSIRDEFSMNSAADSPMSTTGRPMVLTKAAMKAFNSTPPKKKNSSSGQHDSSSGSSSDSSSSDGSTSSDDSSDDEVPKQTEPVTSIPVVASDNGSPENVVVETPSIVSQTPREPEPFTISEQSSESEPEAVPECPEASVEPQMETSQNVEPVSEEHEDSHEHGDSEVAVESQQQPLEHQEEKEELENKILDVAAEHHEEQVQGDEDSVESSIPAPSDEPDPVTQAQEKSAHTLISDQETDQAVQSIFDEEEADEFPQYPDFGISTNEKEVSGKDPHNIKPTEPLNNGHTDLLFSPSSSAHASEKQSTKSEDDMEEDSELVVMEKEVPMEQVIAQEVHVPSEPSPMEEEVKLETSPVPKEEPIKMEESPEQTPTPDLISNNESQDTPGAVNNHLHENHDAVQTPIQLQPASQHQVAQPSPRPAVAPDSQQNGPVLVSQQSQPSPMSSQQSDMAQNLILSSKDINDLAAKLHKNPEALAQATRGDCSGIFQHLLLHAQGNGQNMTPEMLQLKAAFFAQQQENEANQMMQAKMKQQTINKDRIKEQERVKRMYEENERKVEEDRREKQRKEEERQRLAAATAAATMATQKAAEALKQKQEVPRHGFQHVLSMMTPEARSLYEQFPGLSSYINRDSIGATNGVLHLPTQSIQRPSSTASTSSNPPKAPLQPSASVNQNTIDPAEIEEIRVQRWFYK</original>
    <variation>MSAEEAATVMAVASSDPNPPATSTVDLAAMLQQLQAAQAAQAAQQVPVVTTASTPNPLSNLETLLSTASLANLATGGALNPLSMLALTSSLNQSSPVYQGIARVLLTMNMGQMLATHQTSELLATMNQQETLMALLAARNGLPFAMPQQNQQPQMPAQGGFAIPTVLPHMSLKRNAKDQLSVGGVSDRKKSCPLHAMIGQGQQPPPPQQPMQAVAPAPPRSPSPPRKSMFENLPPEMKEKNEMFRKEILRRLDIILLEELGAEDEEDQKPDLKQIPTSEEDTDDSKADSMGAEGSAFRRILSRSSTMGNNSGSPSASGTTSPSTSSSISSGPDSPPLEGEPLNSEFMDMLTEVAQKHREQSNTDALSAKIVDEQSFSQ</variation>
    <location>
        <begin position="1"/>
        <end position="2218"/>
    </location>
</feature>
<feature type="splice variant" id="VSP_057863" description="In isoform f." evidence="7">
    <location>
        <begin position="1"/>
        <end position="393"/>
    </location>
</feature>
<feature type="splice variant" id="VSP_057864" description="In isoform e." evidence="7">
    <location>
        <begin position="1"/>
        <end position="306"/>
    </location>
</feature>
<feature type="splice variant" id="VSP_057865" description="In isoform c." evidence="7">
    <location>
        <begin position="118"/>
        <end position="132"/>
    </location>
</feature>
<feature type="splice variant" id="VSP_057866" description="In isoform a." evidence="7">
    <location>
        <begin position="1568"/>
        <end position="1763"/>
    </location>
</feature>
<proteinExistence type="evidence at protein level"/>
<keyword id="KW-0025">Alternative splicing</keyword>
<keyword id="KW-0175">Coiled coil</keyword>
<keyword id="KW-0539">Nucleus</keyword>
<keyword id="KW-1185">Reference proteome</keyword>
<keyword id="KW-0694">RNA-binding</keyword>
<keyword id="KW-0804">Transcription</keyword>
<keyword id="KW-0805">Transcription regulation</keyword>
<accession>G5EGK6</accession>
<accession>E1B6R6</accession>
<accession>G5EBT0</accession>
<accession>G5ED50</accession>
<accession>G5EDA4</accession>
<accession>G5EEE3</accession>
<accession>Q8I124</accession>